<dbReference type="EMBL" id="BA000034">
    <property type="protein sequence ID" value="BAC64433.1"/>
    <property type="molecule type" value="Genomic_DNA"/>
</dbReference>
<dbReference type="RefSeq" id="WP_000048058.1">
    <property type="nucleotide sequence ID" value="NC_004606.1"/>
</dbReference>
<dbReference type="SMR" id="P0DE87"/>
<dbReference type="GeneID" id="93936799"/>
<dbReference type="KEGG" id="sps:SPs1338"/>
<dbReference type="HOGENOM" id="CLU_159258_3_2_9"/>
<dbReference type="GO" id="GO:1990904">
    <property type="term" value="C:ribonucleoprotein complex"/>
    <property type="evidence" value="ECO:0007669"/>
    <property type="project" value="UniProtKB-KW"/>
</dbReference>
<dbReference type="GO" id="GO:0005840">
    <property type="term" value="C:ribosome"/>
    <property type="evidence" value="ECO:0007669"/>
    <property type="project" value="UniProtKB-KW"/>
</dbReference>
<dbReference type="GO" id="GO:0003735">
    <property type="term" value="F:structural constituent of ribosome"/>
    <property type="evidence" value="ECO:0007669"/>
    <property type="project" value="InterPro"/>
</dbReference>
<dbReference type="GO" id="GO:0006412">
    <property type="term" value="P:translation"/>
    <property type="evidence" value="ECO:0007669"/>
    <property type="project" value="UniProtKB-UniRule"/>
</dbReference>
<dbReference type="Gene3D" id="1.20.5.1150">
    <property type="entry name" value="Ribosomal protein S8"/>
    <property type="match status" value="1"/>
</dbReference>
<dbReference type="HAMAP" id="MF_00358">
    <property type="entry name" value="Ribosomal_bS21"/>
    <property type="match status" value="1"/>
</dbReference>
<dbReference type="InterPro" id="IPR001911">
    <property type="entry name" value="Ribosomal_bS21"/>
</dbReference>
<dbReference type="InterPro" id="IPR018278">
    <property type="entry name" value="Ribosomal_bS21_CS"/>
</dbReference>
<dbReference type="InterPro" id="IPR038380">
    <property type="entry name" value="Ribosomal_bS21_sf"/>
</dbReference>
<dbReference type="NCBIfam" id="TIGR00030">
    <property type="entry name" value="S21p"/>
    <property type="match status" value="1"/>
</dbReference>
<dbReference type="PANTHER" id="PTHR21109">
    <property type="entry name" value="MITOCHONDRIAL 28S RIBOSOMAL PROTEIN S21"/>
    <property type="match status" value="1"/>
</dbReference>
<dbReference type="PANTHER" id="PTHR21109:SF22">
    <property type="entry name" value="SMALL RIBOSOMAL SUBUNIT PROTEIN BS21"/>
    <property type="match status" value="1"/>
</dbReference>
<dbReference type="Pfam" id="PF01165">
    <property type="entry name" value="Ribosomal_S21"/>
    <property type="match status" value="1"/>
</dbReference>
<dbReference type="PRINTS" id="PR00976">
    <property type="entry name" value="RIBOSOMALS21"/>
</dbReference>
<dbReference type="PROSITE" id="PS01181">
    <property type="entry name" value="RIBOSOMAL_S21"/>
    <property type="match status" value="1"/>
</dbReference>
<organism>
    <name type="scientific">Streptococcus pyogenes serotype M3 (strain SSI-1)</name>
    <dbReference type="NCBI Taxonomy" id="193567"/>
    <lineage>
        <taxon>Bacteria</taxon>
        <taxon>Bacillati</taxon>
        <taxon>Bacillota</taxon>
        <taxon>Bacilli</taxon>
        <taxon>Lactobacillales</taxon>
        <taxon>Streptococcaceae</taxon>
        <taxon>Streptococcus</taxon>
    </lineage>
</organism>
<sequence length="58" mass="6972">MSKTVVRKNESLDDALRRFKRSVTKAGTLQESRKREFYEKPSVKRKRKSEAARKRKKF</sequence>
<keyword id="KW-0687">Ribonucleoprotein</keyword>
<keyword id="KW-0689">Ribosomal protein</keyword>
<comment type="similarity">
    <text evidence="1">Belongs to the bacterial ribosomal protein bS21 family.</text>
</comment>
<proteinExistence type="inferred from homology"/>
<reference key="1">
    <citation type="journal article" date="2003" name="Genome Res.">
        <title>Genome sequence of an M3 strain of Streptococcus pyogenes reveals a large-scale genomic rearrangement in invasive strains and new insights into phage evolution.</title>
        <authorList>
            <person name="Nakagawa I."/>
            <person name="Kurokawa K."/>
            <person name="Yamashita A."/>
            <person name="Nakata M."/>
            <person name="Tomiyasu Y."/>
            <person name="Okahashi N."/>
            <person name="Kawabata S."/>
            <person name="Yamazaki K."/>
            <person name="Shiba T."/>
            <person name="Yasunaga T."/>
            <person name="Hayashi H."/>
            <person name="Hattori M."/>
            <person name="Hamada S."/>
        </authorList>
    </citation>
    <scope>NUCLEOTIDE SEQUENCE [LARGE SCALE GENOMIC DNA]</scope>
    <source>
        <strain>SSI-1</strain>
    </source>
</reference>
<evidence type="ECO:0000255" key="1">
    <source>
        <dbReference type="HAMAP-Rule" id="MF_00358"/>
    </source>
</evidence>
<evidence type="ECO:0000256" key="2">
    <source>
        <dbReference type="SAM" id="MobiDB-lite"/>
    </source>
</evidence>
<evidence type="ECO:0000305" key="3"/>
<protein>
    <recommendedName>
        <fullName evidence="1">Small ribosomal subunit protein bS21</fullName>
    </recommendedName>
    <alternativeName>
        <fullName evidence="3">30S ribosomal protein S21</fullName>
    </alternativeName>
</protein>
<feature type="chain" id="PRO_0000411533" description="Small ribosomal subunit protein bS21">
    <location>
        <begin position="1"/>
        <end position="58"/>
    </location>
</feature>
<feature type="region of interest" description="Disordered" evidence="2">
    <location>
        <begin position="36"/>
        <end position="58"/>
    </location>
</feature>
<feature type="compositionally biased region" description="Basic residues" evidence="2">
    <location>
        <begin position="43"/>
        <end position="58"/>
    </location>
</feature>
<gene>
    <name evidence="1" type="primary">rpsU</name>
    <name type="ordered locus">SPs1338</name>
</gene>
<accession>P0DE87</accession>
<accession>P66527</accession>
<accession>Q9A0H1</accession>
<name>RS21_STRPQ</name>